<organism>
    <name type="scientific">Zoanthus sp.</name>
    <name type="common">Green polyp</name>
    <dbReference type="NCBI Taxonomy" id="105402"/>
    <lineage>
        <taxon>Eukaryota</taxon>
        <taxon>Metazoa</taxon>
        <taxon>Cnidaria</taxon>
        <taxon>Anthozoa</taxon>
        <taxon>Hexacorallia</taxon>
        <taxon>Zoantharia</taxon>
        <taxon>Zoanthidae</taxon>
        <taxon>Zoanthus</taxon>
    </lineage>
</organism>
<evidence type="ECO:0000250" key="1">
    <source>
        <dbReference type="UniProtKB" id="Q9U6Y8"/>
    </source>
</evidence>
<evidence type="ECO:0000269" key="2">
    <source>
    </source>
</evidence>
<evidence type="ECO:0000269" key="3">
    <source>
    </source>
</evidence>
<evidence type="ECO:0000305" key="4"/>
<evidence type="ECO:0000305" key="5">
    <source>
    </source>
</evidence>
<evidence type="ECO:0000312" key="6">
    <source>
        <dbReference type="EMBL" id="AAF03373.1"/>
    </source>
</evidence>
<evidence type="ECO:0007829" key="7">
    <source>
        <dbReference type="PDB" id="2OGR"/>
    </source>
</evidence>
<evidence type="ECO:0007829" key="8">
    <source>
        <dbReference type="PDB" id="5Y8R"/>
    </source>
</evidence>
<comment type="function">
    <text evidence="2 3">Pigment protein that is yellow in color.</text>
</comment>
<comment type="biophysicochemical properties">
    <absorption>
        <max evidence="3">528 nm</max>
        <text>Exhibits a smaller absorbance peak at 494 nm. Has a strong fluorescence emission spectrum which peaks at 538 nm.</text>
    </absorption>
</comment>
<comment type="subunit">
    <text evidence="3">Homotetramer.</text>
</comment>
<comment type="tissue specificity">
    <text evidence="2">Tentacle and oral disk.</text>
</comment>
<comment type="PTM">
    <text>Contains a chromophore consisting of modified amino acid residues. The chromophore is formed by autocatalytic backbone condensation between Xaa-N and Gly-(N+2), and oxidation of Tyr-(N+1) to didehydrotyrosine. In addition, the residue N lysine undergoes cyclization. The alpha-amino nitrogen is replaced by the epsilon-amino nitrogen, the peptide chain is broken, residue N-1 is released as an amide, and a double bond is formed between the alpha-carbon and the nitrogen so that a tetrahydropyridine ring results. Maturation of the chromophore requires nothing other than molecular oxygen.</text>
</comment>
<comment type="biotechnology">
    <text evidence="4">Fluorescent proteins have become a useful and ubiquitous tool for making chimeric proteins, where they function as a fluorescent protein tag. Typically they tolerate N- and C-terminal fusion to a broad variety of proteins. They have been expressed in most known cell types and are used as a noninvasive fluorescent marker in living cells and organisms. They enable a wide range of applications where they have functioned as a cell lineage tracer, reporter of gene expression, or as a measure of protein-protein interactions.</text>
</comment>
<comment type="miscellaneous">
    <text>Fluorescence excitation of the Glu-66 mutant is at 493 nm and 550 nm with intense green emission at 405 nm and a weak red emission at 576 nm. Fluorescence emission of the Asp-66 mutant is at 524 nm and 552 nm and with a broad red emission shoulder extending from 650 nm.</text>
</comment>
<comment type="similarity">
    <text evidence="2">Belongs to the GFP family.</text>
</comment>
<dbReference type="EMBL" id="AF168423">
    <property type="protein sequence ID" value="AAF03373.1"/>
    <property type="molecule type" value="mRNA"/>
</dbReference>
<dbReference type="PDB" id="1XA9">
    <property type="method" value="X-ray"/>
    <property type="resolution" value="2.50 A"/>
    <property type="chains" value="A=1-231"/>
</dbReference>
<dbReference type="PDB" id="1XAE">
    <property type="method" value="X-ray"/>
    <property type="resolution" value="2.70 A"/>
    <property type="chains" value="A/B=1-231"/>
</dbReference>
<dbReference type="PDB" id="2OGR">
    <property type="method" value="X-ray"/>
    <property type="resolution" value="1.80 A"/>
    <property type="chains" value="A/B/C/D=1-231"/>
</dbReference>
<dbReference type="PDB" id="5Y8Q">
    <property type="method" value="X-ray"/>
    <property type="resolution" value="2.90 A"/>
    <property type="chains" value="A/B=1-231"/>
</dbReference>
<dbReference type="PDB" id="5Y8R">
    <property type="method" value="X-ray"/>
    <property type="resolution" value="2.30 A"/>
    <property type="chains" value="A=1-231"/>
</dbReference>
<dbReference type="PDBsum" id="1XA9"/>
<dbReference type="PDBsum" id="1XAE"/>
<dbReference type="PDBsum" id="2OGR"/>
<dbReference type="PDBsum" id="5Y8Q"/>
<dbReference type="PDBsum" id="5Y8R"/>
<dbReference type="SMR" id="Q9U6Y4"/>
<dbReference type="EvolutionaryTrace" id="Q9U6Y4"/>
<dbReference type="GO" id="GO:0008218">
    <property type="term" value="P:bioluminescence"/>
    <property type="evidence" value="ECO:0007669"/>
    <property type="project" value="UniProtKB-KW"/>
</dbReference>
<dbReference type="Gene3D" id="2.40.155.10">
    <property type="entry name" value="Green fluorescent protein"/>
    <property type="match status" value="1"/>
</dbReference>
<dbReference type="InterPro" id="IPR009017">
    <property type="entry name" value="GFP"/>
</dbReference>
<dbReference type="InterPro" id="IPR011584">
    <property type="entry name" value="GFP-related"/>
</dbReference>
<dbReference type="Pfam" id="PF01353">
    <property type="entry name" value="GFP"/>
    <property type="match status" value="1"/>
</dbReference>
<dbReference type="SUPFAM" id="SSF54511">
    <property type="entry name" value="GFP-like"/>
    <property type="match status" value="1"/>
</dbReference>
<name>GFPL2_ZOASP</name>
<proteinExistence type="evidence at protein level"/>
<sequence length="231" mass="26171">MAHSKHGLKEEMTMKYHMEGCVNGHKFVITGEGIGYPFKGKQTINLCVIEGGPLPFSEDILSAGFKYGDRIFTEYPQDIVDYFKNSCPAGYTWGRSFLFEDGAVCICNVDITVSVKENCIYHKSIFNGMNFPADGPVMKKMTTNWEASCEKIMPVPKQGILKGDVSMYLLLKDGGRYRCQFDTVYKAKSVPSKMPEWHFIQHKLLREDRSDAKNQKWQLTEHAIAFPSALA</sequence>
<accession>Q9U6Y4</accession>
<reference evidence="4 6" key="1">
    <citation type="journal article" date="1999" name="Nat. Biotechnol.">
        <title>Fluorescent proteins from nonbioluminescent Anthozoa species.</title>
        <authorList>
            <person name="Matz M.V."/>
            <person name="Fradkov A.F."/>
            <person name="Labas Y.A."/>
            <person name="Savitsky A.P."/>
            <person name="Zaraisky A.G."/>
            <person name="Markelov M.L."/>
            <person name="Lukyanov S.A."/>
        </authorList>
    </citation>
    <scope>NUCLEOTIDE SEQUENCE [MRNA]</scope>
    <scope>FUNCTION</scope>
    <scope>TISSUE SPECIFICITY</scope>
</reference>
<reference key="2">
    <citation type="journal article" date="2005" name="Biochemistry">
        <title>zFP538, a yellow-fluorescent protein from Zoanthus, contains a novel three-ring chromophore.</title>
        <authorList>
            <person name="Remington S.J."/>
            <person name="Wachter R.M."/>
            <person name="Yarbrough D.K."/>
            <person name="Branchaud B."/>
            <person name="Anderson D.C."/>
            <person name="Kallio K."/>
            <person name="Lukyanov K.A."/>
        </authorList>
    </citation>
    <scope>X-RAY CRYSTALLOGRAPHY (2.5 ANGSTROMS)</scope>
    <scope>FUNCTION</scope>
    <scope>BIOPHYSICOCHEMICAL PROPERTIES</scope>
    <scope>SUBUNIT</scope>
    <scope>AMIDATION AT PHE-65</scope>
    <scope>CHROMOPHORE STRUCTURE</scope>
    <scope>MUTAGENESIS OF LYS-66</scope>
</reference>
<feature type="chain" id="PRO_0000010858" description="GFP-like fluorescent chromoprotein FP538 chain 1">
    <location>
        <begin position="1"/>
        <end position="65"/>
    </location>
</feature>
<feature type="chain" id="PRO_0000010859" description="GFP-like fluorescent chromoprotein FP538 chain 2">
    <location>
        <begin position="66"/>
        <end position="231"/>
    </location>
</feature>
<feature type="site" description="Cleavage">
    <location>
        <begin position="65"/>
        <end position="66"/>
    </location>
</feature>
<feature type="modified residue" description="Phenylalanine amide; atypical" evidence="5">
    <location>
        <position position="65"/>
    </location>
</feature>
<feature type="modified residue" description="2,3-didehydrotyrosine" evidence="1">
    <location>
        <position position="67"/>
    </location>
</feature>
<feature type="cross-link" description="2-tetrahydro-2-pyridyl-5-imidazolinone (Lys-Gly)" evidence="3">
    <location>
        <begin position="66"/>
        <end position="68"/>
    </location>
</feature>
<feature type="mutagenesis site" description="Changes fluorescence emission from yellow to green." evidence="3">
    <original>K</original>
    <variation>A</variation>
    <variation>C</variation>
    <variation>F</variation>
    <variation>G</variation>
    <variation>H</variation>
    <variation>L</variation>
    <variation>N</variation>
    <variation>S</variation>
    <variation>T</variation>
    <variation>P</variation>
    <variation>Q</variation>
    <location>
        <position position="66"/>
    </location>
</feature>
<feature type="mutagenesis site" description="Changes fluorescence emission from yellow to green with a weak red peak." evidence="3">
    <original>K</original>
    <variation>E</variation>
    <variation>D</variation>
    <location>
        <position position="66"/>
    </location>
</feature>
<feature type="mutagenesis site" description="Produces a non-fluorescent form." evidence="3">
    <original>K</original>
    <variation>I</variation>
    <variation>R</variation>
    <variation>W</variation>
    <variation>Y</variation>
    <location>
        <position position="66"/>
    </location>
</feature>
<feature type="strand" evidence="7">
    <location>
        <begin position="10"/>
        <end position="22"/>
    </location>
</feature>
<feature type="strand" evidence="7">
    <location>
        <begin position="25"/>
        <end position="36"/>
    </location>
</feature>
<feature type="helix" evidence="7">
    <location>
        <begin position="37"/>
        <end position="39"/>
    </location>
</feature>
<feature type="strand" evidence="7">
    <location>
        <begin position="41"/>
        <end position="51"/>
    </location>
</feature>
<feature type="helix" evidence="7">
    <location>
        <begin position="58"/>
        <end position="64"/>
    </location>
</feature>
<feature type="helix" evidence="8">
    <location>
        <begin position="70"/>
        <end position="72"/>
    </location>
</feature>
<feature type="helix" evidence="7">
    <location>
        <begin position="82"/>
        <end position="85"/>
    </location>
</feature>
<feature type="turn" evidence="7">
    <location>
        <begin position="86"/>
        <end position="89"/>
    </location>
</feature>
<feature type="strand" evidence="7">
    <location>
        <begin position="91"/>
        <end position="99"/>
    </location>
</feature>
<feature type="strand" evidence="7">
    <location>
        <begin position="104"/>
        <end position="114"/>
    </location>
</feature>
<feature type="turn" evidence="7">
    <location>
        <begin position="115"/>
        <end position="118"/>
    </location>
</feature>
<feature type="strand" evidence="7">
    <location>
        <begin position="119"/>
        <end position="129"/>
    </location>
</feature>
<feature type="turn" evidence="7">
    <location>
        <begin position="136"/>
        <end position="140"/>
    </location>
</feature>
<feature type="strand" evidence="7">
    <location>
        <begin position="142"/>
        <end position="145"/>
    </location>
</feature>
<feature type="strand" evidence="7">
    <location>
        <begin position="148"/>
        <end position="154"/>
    </location>
</feature>
<feature type="turn" evidence="7">
    <location>
        <begin position="156"/>
        <end position="158"/>
    </location>
</feature>
<feature type="strand" evidence="7">
    <location>
        <begin position="161"/>
        <end position="171"/>
    </location>
</feature>
<feature type="strand" evidence="7">
    <location>
        <begin position="176"/>
        <end position="189"/>
    </location>
</feature>
<feature type="strand" evidence="7">
    <location>
        <begin position="197"/>
        <end position="208"/>
    </location>
</feature>
<feature type="strand" evidence="7">
    <location>
        <begin position="216"/>
        <end position="226"/>
    </location>
</feature>
<keyword id="KW-0002">3D-structure</keyword>
<keyword id="KW-0027">Amidation</keyword>
<keyword id="KW-0157">Chromophore</keyword>
<keyword id="KW-0455">Luminescence</keyword>
<keyword id="KW-0599">Photoprotein</keyword>
<protein>
    <recommendedName>
        <fullName>GFP-like fluorescent chromoprotein FP538</fullName>
    </recommendedName>
    <alternativeName>
        <fullName>zFP538</fullName>
    </alternativeName>
    <component>
        <recommendedName>
            <fullName>GFP-like fluorescent chromoprotein FP538 chain 1</fullName>
        </recommendedName>
    </component>
    <component>
        <recommendedName>
            <fullName>GFP-like fluorescent chromoprotein FP538 chain 2</fullName>
        </recommendedName>
    </component>
</protein>